<sequence>SESEVPGMWFGPRL</sequence>
<keyword id="KW-0027">Amidation</keyword>
<keyword id="KW-0903">Direct protein sequencing</keyword>
<keyword id="KW-0527">Neuropeptide</keyword>
<keyword id="KW-0964">Secreted</keyword>
<protein>
    <recommendedName>
        <fullName>Pyrokinin-6</fullName>
    </recommendedName>
    <alternativeName>
        <fullName>FXPRL-amide</fullName>
    </alternativeName>
</protein>
<name>PPK6_BLAOR</name>
<accession>P84420</accession>
<evidence type="ECO:0000250" key="1">
    <source>
        <dbReference type="UniProtKB" id="P82693"/>
    </source>
</evidence>
<evidence type="ECO:0000255" key="2"/>
<evidence type="ECO:0000269" key="3">
    <source>
    </source>
</evidence>
<evidence type="ECO:0000305" key="4"/>
<feature type="peptide" id="PRO_0000044352" description="Pyrokinin-6">
    <location>
        <begin position="1"/>
        <end position="14"/>
    </location>
</feature>
<feature type="modified residue" description="Leucine amide" evidence="3">
    <location>
        <position position="14"/>
    </location>
</feature>
<dbReference type="GO" id="GO:0005576">
    <property type="term" value="C:extracellular region"/>
    <property type="evidence" value="ECO:0007669"/>
    <property type="project" value="UniProtKB-SubCell"/>
</dbReference>
<dbReference type="GO" id="GO:0005184">
    <property type="term" value="F:neuropeptide hormone activity"/>
    <property type="evidence" value="ECO:0007669"/>
    <property type="project" value="InterPro"/>
</dbReference>
<dbReference type="GO" id="GO:0007218">
    <property type="term" value="P:neuropeptide signaling pathway"/>
    <property type="evidence" value="ECO:0007669"/>
    <property type="project" value="UniProtKB-KW"/>
</dbReference>
<dbReference type="InterPro" id="IPR001484">
    <property type="entry name" value="Pyrokinin_CS"/>
</dbReference>
<dbReference type="PROSITE" id="PS00539">
    <property type="entry name" value="PYROKININ"/>
    <property type="match status" value="1"/>
</dbReference>
<organism>
    <name type="scientific">Blatta orientalis</name>
    <name type="common">Oriental cockroach</name>
    <dbReference type="NCBI Taxonomy" id="6976"/>
    <lineage>
        <taxon>Eukaryota</taxon>
        <taxon>Metazoa</taxon>
        <taxon>Ecdysozoa</taxon>
        <taxon>Arthropoda</taxon>
        <taxon>Hexapoda</taxon>
        <taxon>Insecta</taxon>
        <taxon>Pterygota</taxon>
        <taxon>Neoptera</taxon>
        <taxon>Polyneoptera</taxon>
        <taxon>Dictyoptera</taxon>
        <taxon>Blattodea</taxon>
        <taxon>Blattoidea</taxon>
        <taxon>Blattidae</taxon>
        <taxon>Blattinae</taxon>
        <taxon>Blatta</taxon>
    </lineage>
</organism>
<reference evidence="4" key="1">
    <citation type="journal article" date="2005" name="Peptides">
        <title>Peptidomics of neurohemal organs from species of the cockroach family Blattidae: how do neuropeptides of closely related species differ?</title>
        <authorList>
            <person name="Predel R."/>
            <person name="Gaede G."/>
        </authorList>
    </citation>
    <scope>PROTEIN SEQUENCE</scope>
    <scope>MASS SPECTROMETRY</scope>
    <scope>AMIDATION AT LEU-14</scope>
    <source>
        <tissue evidence="3">Corpora allata</tissue>
    </source>
</reference>
<comment type="function">
    <text evidence="1">Shows a weakly myoactive action.</text>
</comment>
<comment type="subcellular location">
    <subcellularLocation>
        <location evidence="4">Secreted</location>
    </subcellularLocation>
</comment>
<comment type="mass spectrometry"/>
<comment type="similarity">
    <text evidence="2">Belongs to the pyrokinin family.</text>
</comment>
<proteinExistence type="evidence at protein level"/>